<accession>Q9UYI6</accession>
<accession>G8ZIU2</accession>
<reference key="1">
    <citation type="journal article" date="2003" name="Mol. Microbiol.">
        <title>An integrated analysis of the genome of the hyperthermophilic archaeon Pyrococcus abyssi.</title>
        <authorList>
            <person name="Cohen G.N."/>
            <person name="Barbe V."/>
            <person name="Flament D."/>
            <person name="Galperin M."/>
            <person name="Heilig R."/>
            <person name="Lecompte O."/>
            <person name="Poch O."/>
            <person name="Prieur D."/>
            <person name="Querellou J."/>
            <person name="Ripp R."/>
            <person name="Thierry J.-C."/>
            <person name="Van der Oost J."/>
            <person name="Weissenbach J."/>
            <person name="Zivanovic Y."/>
            <person name="Forterre P."/>
        </authorList>
    </citation>
    <scope>NUCLEOTIDE SEQUENCE [LARGE SCALE GENOMIC DNA]</scope>
    <source>
        <strain>GE5 / Orsay</strain>
    </source>
</reference>
<reference key="2">
    <citation type="journal article" date="2012" name="Curr. Microbiol.">
        <title>Re-annotation of two hyperthermophilic archaea Pyrococcus abyssi GE5 and Pyrococcus furiosus DSM 3638.</title>
        <authorList>
            <person name="Gao J."/>
            <person name="Wang J."/>
        </authorList>
    </citation>
    <scope>GENOME REANNOTATION</scope>
    <source>
        <strain>GE5 / Orsay</strain>
    </source>
</reference>
<organism>
    <name type="scientific">Pyrococcus abyssi (strain GE5 / Orsay)</name>
    <dbReference type="NCBI Taxonomy" id="272844"/>
    <lineage>
        <taxon>Archaea</taxon>
        <taxon>Methanobacteriati</taxon>
        <taxon>Methanobacteriota</taxon>
        <taxon>Thermococci</taxon>
        <taxon>Thermococcales</taxon>
        <taxon>Thermococcaceae</taxon>
        <taxon>Pyrococcus</taxon>
    </lineage>
</organism>
<sequence>MHIERLDFENSPYLGVFGVATDRVVLVREGLQEKKLEVIREVLKVPVIEASIMKSRIIGTLATGNSNAILVPWYVWDTEIERIKSAFKEYGIETEIVPFRTKYTALGNLILTNDKAALVSAKFSRDEAKEIGDILGVEVERGLIAGLHAVGSAGVVTNKGGLVHPEASDEELEWLSELFKVDVYVGTANMGVPYVGTCMLANSNGVVVGHLTTGPEIVKIEEALGLI</sequence>
<name>IF6_PYRAB</name>
<protein>
    <recommendedName>
        <fullName evidence="1">Translation initiation factor 6</fullName>
        <shortName evidence="1">aIF-6</shortName>
    </recommendedName>
</protein>
<dbReference type="EMBL" id="AJ248287">
    <property type="protein sequence ID" value="CAB50426.1"/>
    <property type="molecule type" value="Genomic_DNA"/>
</dbReference>
<dbReference type="EMBL" id="HE613800">
    <property type="protein sequence ID" value="CCE70975.1"/>
    <property type="molecule type" value="Genomic_DNA"/>
</dbReference>
<dbReference type="PIR" id="E75066">
    <property type="entry name" value="E75066"/>
</dbReference>
<dbReference type="RefSeq" id="WP_010868639.1">
    <property type="nucleotide sequence ID" value="NC_000868.1"/>
</dbReference>
<dbReference type="SMR" id="Q9UYI6"/>
<dbReference type="STRING" id="272844.PAB1005"/>
<dbReference type="KEGG" id="pab:PAB1005"/>
<dbReference type="PATRIC" id="fig|272844.11.peg.1620"/>
<dbReference type="eggNOG" id="arCOG04176">
    <property type="taxonomic scope" value="Archaea"/>
</dbReference>
<dbReference type="HOGENOM" id="CLU_071894_1_0_2"/>
<dbReference type="OrthoDB" id="33582at2157"/>
<dbReference type="PhylomeDB" id="Q9UYI6"/>
<dbReference type="Proteomes" id="UP000000810">
    <property type="component" value="Chromosome"/>
</dbReference>
<dbReference type="Proteomes" id="UP000009139">
    <property type="component" value="Chromosome"/>
</dbReference>
<dbReference type="GO" id="GO:0043022">
    <property type="term" value="F:ribosome binding"/>
    <property type="evidence" value="ECO:0007669"/>
    <property type="project" value="InterPro"/>
</dbReference>
<dbReference type="GO" id="GO:0003743">
    <property type="term" value="F:translation initiation factor activity"/>
    <property type="evidence" value="ECO:0007669"/>
    <property type="project" value="UniProtKB-UniRule"/>
</dbReference>
<dbReference type="GO" id="GO:0042256">
    <property type="term" value="P:cytosolic ribosome assembly"/>
    <property type="evidence" value="ECO:0007669"/>
    <property type="project" value="InterPro"/>
</dbReference>
<dbReference type="CDD" id="cd00527">
    <property type="entry name" value="IF6"/>
    <property type="match status" value="1"/>
</dbReference>
<dbReference type="Gene3D" id="3.75.10.10">
    <property type="entry name" value="L-arginine/glycine Amidinotransferase, Chain A"/>
    <property type="match status" value="1"/>
</dbReference>
<dbReference type="HAMAP" id="MF_00032">
    <property type="entry name" value="eIF_6"/>
    <property type="match status" value="1"/>
</dbReference>
<dbReference type="InterPro" id="IPR002769">
    <property type="entry name" value="eIF6"/>
</dbReference>
<dbReference type="NCBIfam" id="TIGR00323">
    <property type="entry name" value="eIF-6"/>
    <property type="match status" value="1"/>
</dbReference>
<dbReference type="NCBIfam" id="NF003129">
    <property type="entry name" value="PRK04046.1-5"/>
    <property type="match status" value="1"/>
</dbReference>
<dbReference type="PANTHER" id="PTHR10784">
    <property type="entry name" value="TRANSLATION INITIATION FACTOR 6"/>
    <property type="match status" value="1"/>
</dbReference>
<dbReference type="Pfam" id="PF01912">
    <property type="entry name" value="eIF-6"/>
    <property type="match status" value="1"/>
</dbReference>
<dbReference type="PIRSF" id="PIRSF006413">
    <property type="entry name" value="IF-6"/>
    <property type="match status" value="1"/>
</dbReference>
<dbReference type="SMART" id="SM00654">
    <property type="entry name" value="eIF6"/>
    <property type="match status" value="1"/>
</dbReference>
<dbReference type="SUPFAM" id="SSF55909">
    <property type="entry name" value="Pentein"/>
    <property type="match status" value="1"/>
</dbReference>
<feature type="chain" id="PRO_0000153753" description="Translation initiation factor 6">
    <location>
        <begin position="1"/>
        <end position="227"/>
    </location>
</feature>
<gene>
    <name evidence="1" type="primary">eif6</name>
    <name type="ordered locus">PYRAB15210</name>
    <name type="ORF">PAB1005</name>
</gene>
<comment type="function">
    <text evidence="1">Binds to the 50S ribosomal subunit and prevents its association with the 30S ribosomal subunit to form the 70S initiation complex.</text>
</comment>
<comment type="similarity">
    <text evidence="1">Belongs to the eIF-6 family.</text>
</comment>
<evidence type="ECO:0000255" key="1">
    <source>
        <dbReference type="HAMAP-Rule" id="MF_00032"/>
    </source>
</evidence>
<proteinExistence type="inferred from homology"/>
<keyword id="KW-0396">Initiation factor</keyword>
<keyword id="KW-0648">Protein biosynthesis</keyword>